<sequence length="307" mass="33797">MINKDIYQALQQLIPNEKIKVDEPLKRYTYTKTGGNADFYITPTKNEEVQAVVKYAYQNEIPVTYLGNGSNIIIREGGIRGIVISLLSLDHIEVSDDAIIAGSGAAIIDVSRVARDYALTGLEFACGIPGSIGGAVYMNAGAYGGEVKDCIDYALCVNEQGSLIKLTTKELELDYRNSIIQKEHLVVLEAAFTLAPGKMTEIQAKMDDLTERRESKQPLEYPSCGSVFQRPPGHFAGKLIQDSNLQGHRIGGVEVSTKHAGFMVNVDNGTATDYENLIHYVQKTVKEKFGIELNREVRIIGEHPKES</sequence>
<gene>
    <name evidence="1" type="primary">murB</name>
    <name type="ordered locus">SAOUHSC_00752</name>
</gene>
<protein>
    <recommendedName>
        <fullName evidence="1">UDP-N-acetylenolpyruvoylglucosamine reductase</fullName>
        <ecNumber evidence="1">1.3.1.98</ecNumber>
    </recommendedName>
    <alternativeName>
        <fullName evidence="1">UDP-N-acetylmuramate dehydrogenase</fullName>
    </alternativeName>
</protein>
<reference key="1">
    <citation type="book" date="2006" name="Gram positive pathogens, 2nd edition">
        <title>The Staphylococcus aureus NCTC 8325 genome.</title>
        <editorList>
            <person name="Fischetti V."/>
            <person name="Novick R."/>
            <person name="Ferretti J."/>
            <person name="Portnoy D."/>
            <person name="Rood J."/>
        </editorList>
        <authorList>
            <person name="Gillaspy A.F."/>
            <person name="Worrell V."/>
            <person name="Orvis J."/>
            <person name="Roe B.A."/>
            <person name="Dyer D.W."/>
            <person name="Iandolo J.J."/>
        </authorList>
    </citation>
    <scope>NUCLEOTIDE SEQUENCE [LARGE SCALE GENOMIC DNA]</scope>
    <source>
        <strain>NCTC 8325 / PS 47</strain>
    </source>
</reference>
<feature type="chain" id="PRO_1000002915" description="UDP-N-acetylenolpyruvoylglucosamine reductase">
    <location>
        <begin position="1"/>
        <end position="307"/>
    </location>
</feature>
<feature type="domain" description="FAD-binding PCMH-type" evidence="1">
    <location>
        <begin position="33"/>
        <end position="197"/>
    </location>
</feature>
<feature type="active site" evidence="1">
    <location>
        <position position="176"/>
    </location>
</feature>
<feature type="active site" description="Proton donor" evidence="1">
    <location>
        <position position="226"/>
    </location>
</feature>
<feature type="active site" evidence="1">
    <location>
        <position position="296"/>
    </location>
</feature>
<dbReference type="EC" id="1.3.1.98" evidence="1"/>
<dbReference type="EMBL" id="CP000253">
    <property type="protein sequence ID" value="ABD29884.1"/>
    <property type="molecule type" value="Genomic_DNA"/>
</dbReference>
<dbReference type="RefSeq" id="WP_000608440.1">
    <property type="nucleotide sequence ID" value="NZ_LS483365.1"/>
</dbReference>
<dbReference type="RefSeq" id="YP_499311.1">
    <property type="nucleotide sequence ID" value="NC_007795.1"/>
</dbReference>
<dbReference type="SMR" id="Q2G069"/>
<dbReference type="STRING" id="93061.SAOUHSC_00752"/>
<dbReference type="PaxDb" id="1280-SAXN108_0805"/>
<dbReference type="GeneID" id="3919513"/>
<dbReference type="KEGG" id="sao:SAOUHSC_00752"/>
<dbReference type="PATRIC" id="fig|93061.5.peg.678"/>
<dbReference type="eggNOG" id="COG0812">
    <property type="taxonomic scope" value="Bacteria"/>
</dbReference>
<dbReference type="HOGENOM" id="CLU_035304_1_1_9"/>
<dbReference type="OrthoDB" id="9804753at2"/>
<dbReference type="UniPathway" id="UPA00219"/>
<dbReference type="PRO" id="PR:Q2G069"/>
<dbReference type="Proteomes" id="UP000008816">
    <property type="component" value="Chromosome"/>
</dbReference>
<dbReference type="GO" id="GO:0005829">
    <property type="term" value="C:cytosol"/>
    <property type="evidence" value="ECO:0000318"/>
    <property type="project" value="GO_Central"/>
</dbReference>
<dbReference type="GO" id="GO:0071949">
    <property type="term" value="F:FAD binding"/>
    <property type="evidence" value="ECO:0007669"/>
    <property type="project" value="InterPro"/>
</dbReference>
<dbReference type="GO" id="GO:0050660">
    <property type="term" value="F:flavin adenine dinucleotide binding"/>
    <property type="evidence" value="ECO:0000318"/>
    <property type="project" value="GO_Central"/>
</dbReference>
<dbReference type="GO" id="GO:0008762">
    <property type="term" value="F:UDP-N-acetylmuramate dehydrogenase activity"/>
    <property type="evidence" value="ECO:0000318"/>
    <property type="project" value="GO_Central"/>
</dbReference>
<dbReference type="GO" id="GO:0051301">
    <property type="term" value="P:cell division"/>
    <property type="evidence" value="ECO:0007669"/>
    <property type="project" value="UniProtKB-KW"/>
</dbReference>
<dbReference type="GO" id="GO:0071555">
    <property type="term" value="P:cell wall organization"/>
    <property type="evidence" value="ECO:0000318"/>
    <property type="project" value="GO_Central"/>
</dbReference>
<dbReference type="GO" id="GO:0009252">
    <property type="term" value="P:peptidoglycan biosynthetic process"/>
    <property type="evidence" value="ECO:0007669"/>
    <property type="project" value="UniProtKB-UniRule"/>
</dbReference>
<dbReference type="GO" id="GO:0008360">
    <property type="term" value="P:regulation of cell shape"/>
    <property type="evidence" value="ECO:0007669"/>
    <property type="project" value="UniProtKB-KW"/>
</dbReference>
<dbReference type="FunFam" id="3.90.78.10:FF:000001">
    <property type="entry name" value="UDP-N-acetylenolpyruvoylglucosamine reductase"/>
    <property type="match status" value="1"/>
</dbReference>
<dbReference type="Gene3D" id="3.30.465.10">
    <property type="match status" value="1"/>
</dbReference>
<dbReference type="Gene3D" id="3.90.78.10">
    <property type="entry name" value="UDP-N-acetylenolpyruvoylglucosamine reductase, C-terminal domain"/>
    <property type="match status" value="1"/>
</dbReference>
<dbReference type="Gene3D" id="3.30.43.10">
    <property type="entry name" value="Uridine Diphospho-n-acetylenolpyruvylglucosamine Reductase, domain 2"/>
    <property type="match status" value="1"/>
</dbReference>
<dbReference type="HAMAP" id="MF_00037">
    <property type="entry name" value="MurB"/>
    <property type="match status" value="1"/>
</dbReference>
<dbReference type="InterPro" id="IPR016166">
    <property type="entry name" value="FAD-bd_PCMH"/>
</dbReference>
<dbReference type="InterPro" id="IPR036318">
    <property type="entry name" value="FAD-bd_PCMH-like_sf"/>
</dbReference>
<dbReference type="InterPro" id="IPR016167">
    <property type="entry name" value="FAD-bd_PCMH_sub1"/>
</dbReference>
<dbReference type="InterPro" id="IPR016169">
    <property type="entry name" value="FAD-bd_PCMH_sub2"/>
</dbReference>
<dbReference type="InterPro" id="IPR003170">
    <property type="entry name" value="MurB"/>
</dbReference>
<dbReference type="InterPro" id="IPR011601">
    <property type="entry name" value="MurB_C"/>
</dbReference>
<dbReference type="InterPro" id="IPR036635">
    <property type="entry name" value="MurB_C_sf"/>
</dbReference>
<dbReference type="InterPro" id="IPR006094">
    <property type="entry name" value="Oxid_FAD_bind_N"/>
</dbReference>
<dbReference type="NCBIfam" id="TIGR00179">
    <property type="entry name" value="murB"/>
    <property type="match status" value="1"/>
</dbReference>
<dbReference type="NCBIfam" id="NF010480">
    <property type="entry name" value="PRK13905.1"/>
    <property type="match status" value="1"/>
</dbReference>
<dbReference type="PANTHER" id="PTHR21071">
    <property type="entry name" value="UDP-N-ACETYLENOLPYRUVOYLGLUCOSAMINE REDUCTASE"/>
    <property type="match status" value="1"/>
</dbReference>
<dbReference type="PANTHER" id="PTHR21071:SF4">
    <property type="entry name" value="UDP-N-ACETYLENOLPYRUVOYLGLUCOSAMINE REDUCTASE"/>
    <property type="match status" value="1"/>
</dbReference>
<dbReference type="Pfam" id="PF01565">
    <property type="entry name" value="FAD_binding_4"/>
    <property type="match status" value="1"/>
</dbReference>
<dbReference type="Pfam" id="PF02873">
    <property type="entry name" value="MurB_C"/>
    <property type="match status" value="1"/>
</dbReference>
<dbReference type="SUPFAM" id="SSF56176">
    <property type="entry name" value="FAD-binding/transporter-associated domain-like"/>
    <property type="match status" value="1"/>
</dbReference>
<dbReference type="SUPFAM" id="SSF56194">
    <property type="entry name" value="Uridine diphospho-N-Acetylenolpyruvylglucosamine reductase, MurB, C-terminal domain"/>
    <property type="match status" value="1"/>
</dbReference>
<dbReference type="PROSITE" id="PS51387">
    <property type="entry name" value="FAD_PCMH"/>
    <property type="match status" value="1"/>
</dbReference>
<accession>Q2G069</accession>
<organism>
    <name type="scientific">Staphylococcus aureus (strain NCTC 8325 / PS 47)</name>
    <dbReference type="NCBI Taxonomy" id="93061"/>
    <lineage>
        <taxon>Bacteria</taxon>
        <taxon>Bacillati</taxon>
        <taxon>Bacillota</taxon>
        <taxon>Bacilli</taxon>
        <taxon>Bacillales</taxon>
        <taxon>Staphylococcaceae</taxon>
        <taxon>Staphylococcus</taxon>
    </lineage>
</organism>
<name>MURB_STAA8</name>
<comment type="function">
    <text evidence="1">Cell wall formation.</text>
</comment>
<comment type="catalytic activity">
    <reaction evidence="1">
        <text>UDP-N-acetyl-alpha-D-muramate + NADP(+) = UDP-N-acetyl-3-O-(1-carboxyvinyl)-alpha-D-glucosamine + NADPH + H(+)</text>
        <dbReference type="Rhea" id="RHEA:12248"/>
        <dbReference type="ChEBI" id="CHEBI:15378"/>
        <dbReference type="ChEBI" id="CHEBI:57783"/>
        <dbReference type="ChEBI" id="CHEBI:58349"/>
        <dbReference type="ChEBI" id="CHEBI:68483"/>
        <dbReference type="ChEBI" id="CHEBI:70757"/>
        <dbReference type="EC" id="1.3.1.98"/>
    </reaction>
</comment>
<comment type="cofactor">
    <cofactor evidence="1">
        <name>FAD</name>
        <dbReference type="ChEBI" id="CHEBI:57692"/>
    </cofactor>
</comment>
<comment type="pathway">
    <text evidence="1">Cell wall biogenesis; peptidoglycan biosynthesis.</text>
</comment>
<comment type="subcellular location">
    <subcellularLocation>
        <location evidence="1">Cytoplasm</location>
    </subcellularLocation>
</comment>
<comment type="similarity">
    <text evidence="1">Belongs to the MurB family.</text>
</comment>
<proteinExistence type="inferred from homology"/>
<keyword id="KW-0131">Cell cycle</keyword>
<keyword id="KW-0132">Cell division</keyword>
<keyword id="KW-0133">Cell shape</keyword>
<keyword id="KW-0961">Cell wall biogenesis/degradation</keyword>
<keyword id="KW-0963">Cytoplasm</keyword>
<keyword id="KW-0274">FAD</keyword>
<keyword id="KW-0285">Flavoprotein</keyword>
<keyword id="KW-0521">NADP</keyword>
<keyword id="KW-0560">Oxidoreductase</keyword>
<keyword id="KW-0573">Peptidoglycan synthesis</keyword>
<keyword id="KW-1185">Reference proteome</keyword>
<evidence type="ECO:0000255" key="1">
    <source>
        <dbReference type="HAMAP-Rule" id="MF_00037"/>
    </source>
</evidence>